<sequence>MIASKFGIGQQVRHSLLGYLGVVVDIDPVYSLSEPSPDELAVNDELRAAPWYHVVMEDDNGLPVHTYLAEAQLSSELQDEHPEQPSMDELAQTIRKQLQAPRLRN</sequence>
<name>HSPQ_ECOLC</name>
<gene>
    <name evidence="1" type="primary">hspQ</name>
    <name type="ordered locus">EcolC_2630</name>
</gene>
<evidence type="ECO:0000255" key="1">
    <source>
        <dbReference type="HAMAP-Rule" id="MF_01194"/>
    </source>
</evidence>
<evidence type="ECO:0000256" key="2">
    <source>
        <dbReference type="SAM" id="MobiDB-lite"/>
    </source>
</evidence>
<accession>B1IVW6</accession>
<comment type="function">
    <text evidence="1">Involved in the degradation of certain denaturated proteins, including DnaA, during heat shock stress.</text>
</comment>
<comment type="subcellular location">
    <subcellularLocation>
        <location evidence="1">Cytoplasm</location>
    </subcellularLocation>
</comment>
<comment type="similarity">
    <text evidence="1">Belongs to the HspQ family.</text>
</comment>
<dbReference type="EMBL" id="CP000946">
    <property type="protein sequence ID" value="ACA78260.1"/>
    <property type="molecule type" value="Genomic_DNA"/>
</dbReference>
<dbReference type="RefSeq" id="WP_001295356.1">
    <property type="nucleotide sequence ID" value="NZ_MTFT01000009.1"/>
</dbReference>
<dbReference type="SMR" id="B1IVW6"/>
<dbReference type="GeneID" id="93776448"/>
<dbReference type="KEGG" id="ecl:EcolC_2630"/>
<dbReference type="HOGENOM" id="CLU_123865_1_0_6"/>
<dbReference type="GO" id="GO:0005737">
    <property type="term" value="C:cytoplasm"/>
    <property type="evidence" value="ECO:0007669"/>
    <property type="project" value="UniProtKB-SubCell"/>
</dbReference>
<dbReference type="GO" id="GO:0003677">
    <property type="term" value="F:DNA binding"/>
    <property type="evidence" value="ECO:0007669"/>
    <property type="project" value="InterPro"/>
</dbReference>
<dbReference type="GO" id="GO:0009408">
    <property type="term" value="P:response to heat"/>
    <property type="evidence" value="ECO:0007669"/>
    <property type="project" value="UniProtKB-UniRule"/>
</dbReference>
<dbReference type="Gene3D" id="2.30.30.390">
    <property type="entry name" value="Hemimethylated DNA-binding domain"/>
    <property type="match status" value="1"/>
</dbReference>
<dbReference type="HAMAP" id="MF_01194">
    <property type="entry name" value="HspQ"/>
    <property type="match status" value="1"/>
</dbReference>
<dbReference type="InterPro" id="IPR011722">
    <property type="entry name" value="Hemimethylated_DNA-bd_dom"/>
</dbReference>
<dbReference type="InterPro" id="IPR036623">
    <property type="entry name" value="Hemimethylated_DNA-bd_sf"/>
</dbReference>
<dbReference type="InterPro" id="IPR022866">
    <property type="entry name" value="HspQ"/>
</dbReference>
<dbReference type="NCBIfam" id="NF010729">
    <property type="entry name" value="PRK14129.1"/>
    <property type="match status" value="1"/>
</dbReference>
<dbReference type="NCBIfam" id="TIGR02097">
    <property type="entry name" value="yccV"/>
    <property type="match status" value="1"/>
</dbReference>
<dbReference type="Pfam" id="PF08755">
    <property type="entry name" value="YccV-like"/>
    <property type="match status" value="1"/>
</dbReference>
<dbReference type="SMART" id="SM00992">
    <property type="entry name" value="YccV-like"/>
    <property type="match status" value="1"/>
</dbReference>
<dbReference type="SUPFAM" id="SSF141255">
    <property type="entry name" value="YccV-like"/>
    <property type="match status" value="1"/>
</dbReference>
<reference key="1">
    <citation type="submission" date="2008-02" db="EMBL/GenBank/DDBJ databases">
        <title>Complete sequence of Escherichia coli C str. ATCC 8739.</title>
        <authorList>
            <person name="Copeland A."/>
            <person name="Lucas S."/>
            <person name="Lapidus A."/>
            <person name="Glavina del Rio T."/>
            <person name="Dalin E."/>
            <person name="Tice H."/>
            <person name="Bruce D."/>
            <person name="Goodwin L."/>
            <person name="Pitluck S."/>
            <person name="Kiss H."/>
            <person name="Brettin T."/>
            <person name="Detter J.C."/>
            <person name="Han C."/>
            <person name="Kuske C.R."/>
            <person name="Schmutz J."/>
            <person name="Larimer F."/>
            <person name="Land M."/>
            <person name="Hauser L."/>
            <person name="Kyrpides N."/>
            <person name="Mikhailova N."/>
            <person name="Ingram L."/>
            <person name="Richardson P."/>
        </authorList>
    </citation>
    <scope>NUCLEOTIDE SEQUENCE [LARGE SCALE GENOMIC DNA]</scope>
    <source>
        <strain>ATCC 8739 / DSM 1576 / NBRC 3972 / NCIMB 8545 / WDCM 00012 / Crooks</strain>
    </source>
</reference>
<feature type="chain" id="PRO_1000085481" description="Heat shock protein HspQ">
    <location>
        <begin position="1"/>
        <end position="105"/>
    </location>
</feature>
<feature type="region of interest" description="Disordered" evidence="2">
    <location>
        <begin position="75"/>
        <end position="105"/>
    </location>
</feature>
<protein>
    <recommendedName>
        <fullName evidence="1">Heat shock protein HspQ</fullName>
    </recommendedName>
</protein>
<keyword id="KW-0963">Cytoplasm</keyword>
<keyword id="KW-0346">Stress response</keyword>
<proteinExistence type="inferred from homology"/>
<organism>
    <name type="scientific">Escherichia coli (strain ATCC 8739 / DSM 1576 / NBRC 3972 / NCIMB 8545 / WDCM 00012 / Crooks)</name>
    <dbReference type="NCBI Taxonomy" id="481805"/>
    <lineage>
        <taxon>Bacteria</taxon>
        <taxon>Pseudomonadati</taxon>
        <taxon>Pseudomonadota</taxon>
        <taxon>Gammaproteobacteria</taxon>
        <taxon>Enterobacterales</taxon>
        <taxon>Enterobacteriaceae</taxon>
        <taxon>Escherichia</taxon>
    </lineage>
</organism>